<name>QUEC_PROM9</name>
<dbReference type="EC" id="6.3.4.20" evidence="1"/>
<dbReference type="EMBL" id="CP000111">
    <property type="protein sequence ID" value="ABB50845.1"/>
    <property type="molecule type" value="Genomic_DNA"/>
</dbReference>
<dbReference type="RefSeq" id="WP_011377326.1">
    <property type="nucleotide sequence ID" value="NC_007577.1"/>
</dbReference>
<dbReference type="SMR" id="Q317V0"/>
<dbReference type="STRING" id="74546.PMT9312_1784"/>
<dbReference type="KEGG" id="pmi:PMT9312_1784"/>
<dbReference type="eggNOG" id="COG0603">
    <property type="taxonomic scope" value="Bacteria"/>
</dbReference>
<dbReference type="HOGENOM" id="CLU_081854_1_0_3"/>
<dbReference type="OrthoDB" id="9789567at2"/>
<dbReference type="UniPathway" id="UPA00391"/>
<dbReference type="Proteomes" id="UP000002715">
    <property type="component" value="Chromosome"/>
</dbReference>
<dbReference type="GO" id="GO:0005524">
    <property type="term" value="F:ATP binding"/>
    <property type="evidence" value="ECO:0007669"/>
    <property type="project" value="UniProtKB-UniRule"/>
</dbReference>
<dbReference type="GO" id="GO:0016879">
    <property type="term" value="F:ligase activity, forming carbon-nitrogen bonds"/>
    <property type="evidence" value="ECO:0007669"/>
    <property type="project" value="UniProtKB-UniRule"/>
</dbReference>
<dbReference type="GO" id="GO:0008270">
    <property type="term" value="F:zinc ion binding"/>
    <property type="evidence" value="ECO:0007669"/>
    <property type="project" value="UniProtKB-UniRule"/>
</dbReference>
<dbReference type="GO" id="GO:0008616">
    <property type="term" value="P:queuosine biosynthetic process"/>
    <property type="evidence" value="ECO:0007669"/>
    <property type="project" value="UniProtKB-UniRule"/>
</dbReference>
<dbReference type="CDD" id="cd01995">
    <property type="entry name" value="QueC-like"/>
    <property type="match status" value="1"/>
</dbReference>
<dbReference type="Gene3D" id="3.40.50.620">
    <property type="entry name" value="HUPs"/>
    <property type="match status" value="1"/>
</dbReference>
<dbReference type="HAMAP" id="MF_01633">
    <property type="entry name" value="QueC"/>
    <property type="match status" value="1"/>
</dbReference>
<dbReference type="InterPro" id="IPR018317">
    <property type="entry name" value="QueC"/>
</dbReference>
<dbReference type="InterPro" id="IPR014729">
    <property type="entry name" value="Rossmann-like_a/b/a_fold"/>
</dbReference>
<dbReference type="NCBIfam" id="TIGR00364">
    <property type="entry name" value="7-cyano-7-deazaguanine synthase QueC"/>
    <property type="match status" value="1"/>
</dbReference>
<dbReference type="PANTHER" id="PTHR42914">
    <property type="entry name" value="7-CYANO-7-DEAZAGUANINE SYNTHASE"/>
    <property type="match status" value="1"/>
</dbReference>
<dbReference type="PANTHER" id="PTHR42914:SF1">
    <property type="entry name" value="7-CYANO-7-DEAZAGUANINE SYNTHASE"/>
    <property type="match status" value="1"/>
</dbReference>
<dbReference type="Pfam" id="PF06508">
    <property type="entry name" value="QueC"/>
    <property type="match status" value="1"/>
</dbReference>
<dbReference type="PIRSF" id="PIRSF006293">
    <property type="entry name" value="ExsB"/>
    <property type="match status" value="1"/>
</dbReference>
<dbReference type="SUPFAM" id="SSF52402">
    <property type="entry name" value="Adenine nucleotide alpha hydrolases-like"/>
    <property type="match status" value="1"/>
</dbReference>
<comment type="function">
    <text evidence="1">Catalyzes the ATP-dependent conversion of 7-carboxy-7-deazaguanine (CDG) to 7-cyano-7-deazaguanine (preQ(0)).</text>
</comment>
<comment type="catalytic activity">
    <reaction evidence="1">
        <text>7-carboxy-7-deazaguanine + NH4(+) + ATP = 7-cyano-7-deazaguanine + ADP + phosphate + H2O + H(+)</text>
        <dbReference type="Rhea" id="RHEA:27982"/>
        <dbReference type="ChEBI" id="CHEBI:15377"/>
        <dbReference type="ChEBI" id="CHEBI:15378"/>
        <dbReference type="ChEBI" id="CHEBI:28938"/>
        <dbReference type="ChEBI" id="CHEBI:30616"/>
        <dbReference type="ChEBI" id="CHEBI:43474"/>
        <dbReference type="ChEBI" id="CHEBI:45075"/>
        <dbReference type="ChEBI" id="CHEBI:61036"/>
        <dbReference type="ChEBI" id="CHEBI:456216"/>
        <dbReference type="EC" id="6.3.4.20"/>
    </reaction>
</comment>
<comment type="cofactor">
    <cofactor evidence="1">
        <name>Zn(2+)</name>
        <dbReference type="ChEBI" id="CHEBI:29105"/>
    </cofactor>
    <text evidence="1">Binds 1 zinc ion per subunit.</text>
</comment>
<comment type="pathway">
    <text evidence="1">Purine metabolism; 7-cyano-7-deazaguanine biosynthesis.</text>
</comment>
<comment type="similarity">
    <text evidence="1">Belongs to the QueC family.</text>
</comment>
<evidence type="ECO:0000255" key="1">
    <source>
        <dbReference type="HAMAP-Rule" id="MF_01633"/>
    </source>
</evidence>
<organism>
    <name type="scientific">Prochlorococcus marinus (strain MIT 9312)</name>
    <dbReference type="NCBI Taxonomy" id="74546"/>
    <lineage>
        <taxon>Bacteria</taxon>
        <taxon>Bacillati</taxon>
        <taxon>Cyanobacteriota</taxon>
        <taxon>Cyanophyceae</taxon>
        <taxon>Synechococcales</taxon>
        <taxon>Prochlorococcaceae</taxon>
        <taxon>Prochlorococcus</taxon>
    </lineage>
</organism>
<reference key="1">
    <citation type="journal article" date="2006" name="Science">
        <title>Genomic islands and the ecology and evolution of Prochlorococcus.</title>
        <authorList>
            <person name="Coleman M.L."/>
            <person name="Sullivan M.B."/>
            <person name="Martiny A.C."/>
            <person name="Steglich C."/>
            <person name="Barry K."/>
            <person name="Delong E.F."/>
            <person name="Chisholm S.W."/>
        </authorList>
    </citation>
    <scope>NUCLEOTIDE SEQUENCE [LARGE SCALE GENOMIC DNA]</scope>
    <source>
        <strain>MIT 9312</strain>
    </source>
</reference>
<protein>
    <recommendedName>
        <fullName evidence="1">7-cyano-7-deazaguanine synthase</fullName>
        <ecNumber evidence="1">6.3.4.20</ecNumber>
    </recommendedName>
    <alternativeName>
        <fullName evidence="1">7-cyano-7-carbaguanine synthase</fullName>
    </alternativeName>
    <alternativeName>
        <fullName evidence="1">PreQ(0) synthase</fullName>
    </alternativeName>
    <alternativeName>
        <fullName evidence="1">Queuosine biosynthesis protein QueC</fullName>
    </alternativeName>
</protein>
<feature type="chain" id="PRO_0000246879" description="7-cyano-7-deazaguanine synthase">
    <location>
        <begin position="1"/>
        <end position="224"/>
    </location>
</feature>
<feature type="binding site" evidence="1">
    <location>
        <begin position="12"/>
        <end position="22"/>
    </location>
    <ligand>
        <name>ATP</name>
        <dbReference type="ChEBI" id="CHEBI:30616"/>
    </ligand>
</feature>
<feature type="binding site" evidence="1">
    <location>
        <position position="193"/>
    </location>
    <ligand>
        <name>Zn(2+)</name>
        <dbReference type="ChEBI" id="CHEBI:29105"/>
    </ligand>
</feature>
<feature type="binding site" evidence="1">
    <location>
        <position position="201"/>
    </location>
    <ligand>
        <name>Zn(2+)</name>
        <dbReference type="ChEBI" id="CHEBI:29105"/>
    </ligand>
</feature>
<feature type="binding site" evidence="1">
    <location>
        <position position="204"/>
    </location>
    <ligand>
        <name>Zn(2+)</name>
        <dbReference type="ChEBI" id="CHEBI:29105"/>
    </ligand>
</feature>
<feature type="binding site" evidence="1">
    <location>
        <position position="207"/>
    </location>
    <ligand>
        <name>Zn(2+)</name>
        <dbReference type="ChEBI" id="CHEBI:29105"/>
    </ligand>
</feature>
<keyword id="KW-0067">ATP-binding</keyword>
<keyword id="KW-0436">Ligase</keyword>
<keyword id="KW-0479">Metal-binding</keyword>
<keyword id="KW-0547">Nucleotide-binding</keyword>
<keyword id="KW-0671">Queuosine biosynthesis</keyword>
<keyword id="KW-0862">Zinc</keyword>
<accession>Q317V0</accession>
<proteinExistence type="inferred from homology"/>
<gene>
    <name evidence="1" type="primary">queC</name>
    <name type="ordered locus">PMT9312_1784</name>
</gene>
<sequence length="224" mass="25075">MTLKNKSIVVLLSGGLDSSTVTSIAKKSEAKIFGLSFDYGQRHKKELHSASTIAKHFDIQEFKIIKLDLSLWGGSSLTDTKKNIPTEGVQTNKIPNTYVPGRNTIFISVALSYAEAIDADFIGLGVNALDYSGYPDCRPDYIKKFQELADLANKRGRENNPIKLWTPLLDLNKEQIIQLAMDNHVPLDKTWSCYSGDAKPCGKCDSCRIRNTAYKKWLNNKNKK</sequence>